<keyword id="KW-0028">Amino-acid biosynthesis</keyword>
<keyword id="KW-0057">Aromatic amino acid biosynthesis</keyword>
<keyword id="KW-0963">Cytoplasm</keyword>
<keyword id="KW-1185">Reference proteome</keyword>
<keyword id="KW-0808">Transferase</keyword>
<dbReference type="EC" id="2.5.1.19" evidence="1"/>
<dbReference type="EMBL" id="CP000230">
    <property type="protein sequence ID" value="ABC21100.1"/>
    <property type="molecule type" value="Genomic_DNA"/>
</dbReference>
<dbReference type="RefSeq" id="WP_011388048.1">
    <property type="nucleotide sequence ID" value="NC_007643.1"/>
</dbReference>
<dbReference type="RefSeq" id="YP_425387.1">
    <property type="nucleotide sequence ID" value="NC_007643.1"/>
</dbReference>
<dbReference type="SMR" id="Q2RXP5"/>
<dbReference type="STRING" id="269796.Rru_A0295"/>
<dbReference type="EnsemblBacteria" id="ABC21100">
    <property type="protein sequence ID" value="ABC21100"/>
    <property type="gene ID" value="Rru_A0295"/>
</dbReference>
<dbReference type="KEGG" id="rru:Rru_A0295"/>
<dbReference type="PATRIC" id="fig|269796.9.peg.350"/>
<dbReference type="eggNOG" id="COG0128">
    <property type="taxonomic scope" value="Bacteria"/>
</dbReference>
<dbReference type="HOGENOM" id="CLU_024321_0_1_5"/>
<dbReference type="PhylomeDB" id="Q2RXP5"/>
<dbReference type="UniPathway" id="UPA00053">
    <property type="reaction ID" value="UER00089"/>
</dbReference>
<dbReference type="Proteomes" id="UP000001929">
    <property type="component" value="Chromosome"/>
</dbReference>
<dbReference type="GO" id="GO:0005737">
    <property type="term" value="C:cytoplasm"/>
    <property type="evidence" value="ECO:0007669"/>
    <property type="project" value="UniProtKB-SubCell"/>
</dbReference>
<dbReference type="GO" id="GO:0003866">
    <property type="term" value="F:3-phosphoshikimate 1-carboxyvinyltransferase activity"/>
    <property type="evidence" value="ECO:0007669"/>
    <property type="project" value="UniProtKB-UniRule"/>
</dbReference>
<dbReference type="GO" id="GO:0008652">
    <property type="term" value="P:amino acid biosynthetic process"/>
    <property type="evidence" value="ECO:0007669"/>
    <property type="project" value="UniProtKB-KW"/>
</dbReference>
<dbReference type="GO" id="GO:0009073">
    <property type="term" value="P:aromatic amino acid family biosynthetic process"/>
    <property type="evidence" value="ECO:0007669"/>
    <property type="project" value="UniProtKB-KW"/>
</dbReference>
<dbReference type="GO" id="GO:0009423">
    <property type="term" value="P:chorismate biosynthetic process"/>
    <property type="evidence" value="ECO:0007669"/>
    <property type="project" value="UniProtKB-UniRule"/>
</dbReference>
<dbReference type="CDD" id="cd01556">
    <property type="entry name" value="EPSP_synthase"/>
    <property type="match status" value="1"/>
</dbReference>
<dbReference type="FunFam" id="3.65.10.10:FF:000005">
    <property type="entry name" value="3-phosphoshikimate 1-carboxyvinyltransferase"/>
    <property type="match status" value="1"/>
</dbReference>
<dbReference type="Gene3D" id="3.65.10.10">
    <property type="entry name" value="Enolpyruvate transferase domain"/>
    <property type="match status" value="2"/>
</dbReference>
<dbReference type="HAMAP" id="MF_00210">
    <property type="entry name" value="EPSP_synth"/>
    <property type="match status" value="1"/>
</dbReference>
<dbReference type="InterPro" id="IPR001986">
    <property type="entry name" value="Enolpyruvate_Tfrase_dom"/>
</dbReference>
<dbReference type="InterPro" id="IPR036968">
    <property type="entry name" value="Enolpyruvate_Tfrase_sf"/>
</dbReference>
<dbReference type="InterPro" id="IPR006264">
    <property type="entry name" value="EPSP_synthase"/>
</dbReference>
<dbReference type="InterPro" id="IPR023193">
    <property type="entry name" value="EPSP_synthase_CS"/>
</dbReference>
<dbReference type="InterPro" id="IPR013792">
    <property type="entry name" value="RNA3'P_cycl/enolpyr_Trfase_a/b"/>
</dbReference>
<dbReference type="NCBIfam" id="TIGR01356">
    <property type="entry name" value="aroA"/>
    <property type="match status" value="1"/>
</dbReference>
<dbReference type="PANTHER" id="PTHR21090">
    <property type="entry name" value="AROM/DEHYDROQUINATE SYNTHASE"/>
    <property type="match status" value="1"/>
</dbReference>
<dbReference type="PANTHER" id="PTHR21090:SF5">
    <property type="entry name" value="PENTAFUNCTIONAL AROM POLYPEPTIDE"/>
    <property type="match status" value="1"/>
</dbReference>
<dbReference type="Pfam" id="PF00275">
    <property type="entry name" value="EPSP_synthase"/>
    <property type="match status" value="1"/>
</dbReference>
<dbReference type="PIRSF" id="PIRSF000505">
    <property type="entry name" value="EPSPS"/>
    <property type="match status" value="1"/>
</dbReference>
<dbReference type="SUPFAM" id="SSF55205">
    <property type="entry name" value="EPT/RTPC-like"/>
    <property type="match status" value="1"/>
</dbReference>
<dbReference type="PROSITE" id="PS00104">
    <property type="entry name" value="EPSP_SYNTHASE_1"/>
    <property type="match status" value="1"/>
</dbReference>
<dbReference type="PROSITE" id="PS00885">
    <property type="entry name" value="EPSP_SYNTHASE_2"/>
    <property type="match status" value="1"/>
</dbReference>
<feature type="chain" id="PRO_1000058611" description="3-phosphoshikimate 1-carboxyvinyltransferase">
    <location>
        <begin position="1"/>
        <end position="451"/>
    </location>
</feature>
<feature type="active site" description="Proton acceptor" evidence="1">
    <location>
        <position position="331"/>
    </location>
</feature>
<feature type="binding site" evidence="1">
    <location>
        <position position="28"/>
    </location>
    <ligand>
        <name>3-phosphoshikimate</name>
        <dbReference type="ChEBI" id="CHEBI:145989"/>
    </ligand>
</feature>
<feature type="binding site" evidence="1">
    <location>
        <position position="28"/>
    </location>
    <ligand>
        <name>phosphoenolpyruvate</name>
        <dbReference type="ChEBI" id="CHEBI:58702"/>
    </ligand>
</feature>
<feature type="binding site" evidence="1">
    <location>
        <position position="29"/>
    </location>
    <ligand>
        <name>3-phosphoshikimate</name>
        <dbReference type="ChEBI" id="CHEBI:145989"/>
    </ligand>
</feature>
<feature type="binding site" evidence="1">
    <location>
        <position position="33"/>
    </location>
    <ligand>
        <name>3-phosphoshikimate</name>
        <dbReference type="ChEBI" id="CHEBI:145989"/>
    </ligand>
</feature>
<feature type="binding site" evidence="1">
    <location>
        <position position="105"/>
    </location>
    <ligand>
        <name>phosphoenolpyruvate</name>
        <dbReference type="ChEBI" id="CHEBI:58702"/>
    </ligand>
</feature>
<feature type="binding site" evidence="1">
    <location>
        <position position="133"/>
    </location>
    <ligand>
        <name>phosphoenolpyruvate</name>
        <dbReference type="ChEBI" id="CHEBI:58702"/>
    </ligand>
</feature>
<feature type="binding site" evidence="1">
    <location>
        <position position="178"/>
    </location>
    <ligand>
        <name>3-phosphoshikimate</name>
        <dbReference type="ChEBI" id="CHEBI:145989"/>
    </ligand>
</feature>
<feature type="binding site" evidence="1">
    <location>
        <position position="180"/>
    </location>
    <ligand>
        <name>3-phosphoshikimate</name>
        <dbReference type="ChEBI" id="CHEBI:145989"/>
    </ligand>
</feature>
<feature type="binding site" evidence="1">
    <location>
        <position position="180"/>
    </location>
    <ligand>
        <name>phosphoenolpyruvate</name>
        <dbReference type="ChEBI" id="CHEBI:58702"/>
    </ligand>
</feature>
<feature type="binding site" evidence="1">
    <location>
        <position position="331"/>
    </location>
    <ligand>
        <name>3-phosphoshikimate</name>
        <dbReference type="ChEBI" id="CHEBI:145989"/>
    </ligand>
</feature>
<feature type="binding site" evidence="1">
    <location>
        <position position="358"/>
    </location>
    <ligand>
        <name>3-phosphoshikimate</name>
        <dbReference type="ChEBI" id="CHEBI:145989"/>
    </ligand>
</feature>
<feature type="binding site" evidence="1">
    <location>
        <position position="362"/>
    </location>
    <ligand>
        <name>phosphoenolpyruvate</name>
        <dbReference type="ChEBI" id="CHEBI:58702"/>
    </ligand>
</feature>
<feature type="binding site" evidence="1">
    <location>
        <position position="406"/>
    </location>
    <ligand>
        <name>phosphoenolpyruvate</name>
        <dbReference type="ChEBI" id="CHEBI:58702"/>
    </ligand>
</feature>
<protein>
    <recommendedName>
        <fullName evidence="1">3-phosphoshikimate 1-carboxyvinyltransferase</fullName>
        <ecNumber evidence="1">2.5.1.19</ecNumber>
    </recommendedName>
    <alternativeName>
        <fullName evidence="1">5-enolpyruvylshikimate-3-phosphate synthase</fullName>
        <shortName evidence="1">EPSP synthase</shortName>
        <shortName evidence="1">EPSPS</shortName>
    </alternativeName>
</protein>
<evidence type="ECO:0000255" key="1">
    <source>
        <dbReference type="HAMAP-Rule" id="MF_00210"/>
    </source>
</evidence>
<reference key="1">
    <citation type="journal article" date="2011" name="Stand. Genomic Sci.">
        <title>Complete genome sequence of Rhodospirillum rubrum type strain (S1).</title>
        <authorList>
            <person name="Munk A.C."/>
            <person name="Copeland A."/>
            <person name="Lucas S."/>
            <person name="Lapidus A."/>
            <person name="Del Rio T.G."/>
            <person name="Barry K."/>
            <person name="Detter J.C."/>
            <person name="Hammon N."/>
            <person name="Israni S."/>
            <person name="Pitluck S."/>
            <person name="Brettin T."/>
            <person name="Bruce D."/>
            <person name="Han C."/>
            <person name="Tapia R."/>
            <person name="Gilna P."/>
            <person name="Schmutz J."/>
            <person name="Larimer F."/>
            <person name="Land M."/>
            <person name="Kyrpides N.C."/>
            <person name="Mavromatis K."/>
            <person name="Richardson P."/>
            <person name="Rohde M."/>
            <person name="Goeker M."/>
            <person name="Klenk H.P."/>
            <person name="Zhang Y."/>
            <person name="Roberts G.P."/>
            <person name="Reslewic S."/>
            <person name="Schwartz D.C."/>
        </authorList>
    </citation>
    <scope>NUCLEOTIDE SEQUENCE [LARGE SCALE GENOMIC DNA]</scope>
    <source>
        <strain>ATCC 11170 / ATH 1.1.1 / DSM 467 / LMG 4362 / NCIMB 8255 / S1</strain>
    </source>
</reference>
<sequence length="451" mass="46402">MVPPIPPRPLRAHRSTPLSGRIRVPGDKSISHRALMLGGLAVGRTEIRGLLEGEDVIATAHAMEAMGARIDRQETADGAGVWTVDGVGVGGLAEPADVLDMGNAGTGARLLMGLLATHDLTAILTGDASLRGRPMKRVTDPLALFGASFVGRSGGRLPMAVRGTATPLPVSYRVPVPSAQVKSAVLLAGLNTPGETTVIEPVATRDHTERMLGHFGAALRLGRDDQGATTITLTGQPELRAAPVEVPADPSSAAFPLVAAVLVPESHVTLAGVGMNPQRIGLIDTLREMGADILIRDPRIEAGEPVADLEVRASALTGIEVPAARAPSMIDEYPILAVAAACARGTTRMHGLGELRVKESDRLSAVATGLAACGVDVTVDGDTLIVHGKGTVPKGGATVAVNLDHRIGMAFLVLGLVSAEAVTIDDGRAIDTSFPGFVTLMTGLGAPISLI</sequence>
<accession>Q2RXP5</accession>
<name>AROA_RHORT</name>
<gene>
    <name evidence="1" type="primary">aroA</name>
    <name type="ordered locus">Rru_A0295</name>
</gene>
<comment type="function">
    <text evidence="1">Catalyzes the transfer of the enolpyruvyl moiety of phosphoenolpyruvate (PEP) to the 5-hydroxyl of shikimate-3-phosphate (S3P) to produce enolpyruvyl shikimate-3-phosphate and inorganic phosphate.</text>
</comment>
<comment type="catalytic activity">
    <reaction evidence="1">
        <text>3-phosphoshikimate + phosphoenolpyruvate = 5-O-(1-carboxyvinyl)-3-phosphoshikimate + phosphate</text>
        <dbReference type="Rhea" id="RHEA:21256"/>
        <dbReference type="ChEBI" id="CHEBI:43474"/>
        <dbReference type="ChEBI" id="CHEBI:57701"/>
        <dbReference type="ChEBI" id="CHEBI:58702"/>
        <dbReference type="ChEBI" id="CHEBI:145989"/>
        <dbReference type="EC" id="2.5.1.19"/>
    </reaction>
    <physiologicalReaction direction="left-to-right" evidence="1">
        <dbReference type="Rhea" id="RHEA:21257"/>
    </physiologicalReaction>
</comment>
<comment type="pathway">
    <text evidence="1">Metabolic intermediate biosynthesis; chorismate biosynthesis; chorismate from D-erythrose 4-phosphate and phosphoenolpyruvate: step 6/7.</text>
</comment>
<comment type="subunit">
    <text evidence="1">Monomer.</text>
</comment>
<comment type="subcellular location">
    <subcellularLocation>
        <location evidence="1">Cytoplasm</location>
    </subcellularLocation>
</comment>
<comment type="similarity">
    <text evidence="1">Belongs to the EPSP synthase family.</text>
</comment>
<proteinExistence type="inferred from homology"/>
<organism>
    <name type="scientific">Rhodospirillum rubrum (strain ATCC 11170 / ATH 1.1.1 / DSM 467 / LMG 4362 / NCIMB 8255 / S1)</name>
    <dbReference type="NCBI Taxonomy" id="269796"/>
    <lineage>
        <taxon>Bacteria</taxon>
        <taxon>Pseudomonadati</taxon>
        <taxon>Pseudomonadota</taxon>
        <taxon>Alphaproteobacteria</taxon>
        <taxon>Rhodospirillales</taxon>
        <taxon>Rhodospirillaceae</taxon>
        <taxon>Rhodospirillum</taxon>
    </lineage>
</organism>